<feature type="chain" id="PRO_1000004850" description="S-ribosylhomocysteine lyase">
    <location>
        <begin position="1"/>
        <end position="169"/>
    </location>
</feature>
<feature type="binding site" evidence="1">
    <location>
        <position position="54"/>
    </location>
    <ligand>
        <name>Fe cation</name>
        <dbReference type="ChEBI" id="CHEBI:24875"/>
    </ligand>
</feature>
<feature type="binding site" evidence="1">
    <location>
        <position position="58"/>
    </location>
    <ligand>
        <name>Fe cation</name>
        <dbReference type="ChEBI" id="CHEBI:24875"/>
    </ligand>
</feature>
<feature type="binding site" evidence="1">
    <location>
        <position position="128"/>
    </location>
    <ligand>
        <name>Fe cation</name>
        <dbReference type="ChEBI" id="CHEBI:24875"/>
    </ligand>
</feature>
<keyword id="KW-0071">Autoinducer synthesis</keyword>
<keyword id="KW-0408">Iron</keyword>
<keyword id="KW-0456">Lyase</keyword>
<keyword id="KW-0479">Metal-binding</keyword>
<keyword id="KW-0673">Quorum sensing</keyword>
<protein>
    <recommendedName>
        <fullName evidence="1">S-ribosylhomocysteine lyase</fullName>
        <ecNumber evidence="1">4.4.1.21</ecNumber>
    </recommendedName>
    <alternativeName>
        <fullName evidence="1">AI-2 synthesis protein</fullName>
    </alternativeName>
    <alternativeName>
        <fullName evidence="1">Autoinducer-2 production protein LuxS</fullName>
    </alternativeName>
</protein>
<name>LUXS_SULNB</name>
<sequence length="169" mass="19117">MPLLDSFTVDHTRMIAPAVRVAKRMKTPCGDDITVFDLRFCKPNEERMPSKGIHTLEHLFAGFMREHLNSKKVEIIDISPMGCRTGFYMSLLGTPKPKRVAKAWAASMKDVLNVKSQKDIPELNVYQCGSYKMHSLKEAKEIAQNVLDRGIGIMNNKKLKLSKKLLKGL</sequence>
<reference key="1">
    <citation type="journal article" date="2007" name="Proc. Natl. Acad. Sci. U.S.A.">
        <title>Deep-sea vent epsilon-proteobacterial genomes provide insights into emergence of pathogens.</title>
        <authorList>
            <person name="Nakagawa S."/>
            <person name="Takaki Y."/>
            <person name="Shimamura S."/>
            <person name="Reysenbach A.-L."/>
            <person name="Takai K."/>
            <person name="Horikoshi K."/>
        </authorList>
    </citation>
    <scope>NUCLEOTIDE SEQUENCE [LARGE SCALE GENOMIC DNA]</scope>
    <source>
        <strain>NBC37-1</strain>
    </source>
</reference>
<dbReference type="EC" id="4.4.1.21" evidence="1"/>
<dbReference type="EMBL" id="AP009179">
    <property type="protein sequence ID" value="BAF71162.1"/>
    <property type="molecule type" value="Genomic_DNA"/>
</dbReference>
<dbReference type="RefSeq" id="WP_011979895.1">
    <property type="nucleotide sequence ID" value="NC_009663.1"/>
</dbReference>
<dbReference type="SMR" id="A6Q6Q3"/>
<dbReference type="STRING" id="387093.SUN_0202"/>
<dbReference type="KEGG" id="sun:SUN_0202"/>
<dbReference type="eggNOG" id="COG1854">
    <property type="taxonomic scope" value="Bacteria"/>
</dbReference>
<dbReference type="HOGENOM" id="CLU_107531_2_0_7"/>
<dbReference type="OrthoDB" id="9788129at2"/>
<dbReference type="Proteomes" id="UP000006378">
    <property type="component" value="Chromosome"/>
</dbReference>
<dbReference type="GO" id="GO:0005506">
    <property type="term" value="F:iron ion binding"/>
    <property type="evidence" value="ECO:0007669"/>
    <property type="project" value="InterPro"/>
</dbReference>
<dbReference type="GO" id="GO:0043768">
    <property type="term" value="F:S-ribosylhomocysteine lyase activity"/>
    <property type="evidence" value="ECO:0007669"/>
    <property type="project" value="UniProtKB-UniRule"/>
</dbReference>
<dbReference type="GO" id="GO:0009372">
    <property type="term" value="P:quorum sensing"/>
    <property type="evidence" value="ECO:0007669"/>
    <property type="project" value="UniProtKB-UniRule"/>
</dbReference>
<dbReference type="Gene3D" id="3.30.1360.80">
    <property type="entry name" value="S-ribosylhomocysteinase (LuxS)"/>
    <property type="match status" value="1"/>
</dbReference>
<dbReference type="HAMAP" id="MF_00091">
    <property type="entry name" value="LuxS"/>
    <property type="match status" value="1"/>
</dbReference>
<dbReference type="InterPro" id="IPR037005">
    <property type="entry name" value="LuxS_sf"/>
</dbReference>
<dbReference type="InterPro" id="IPR011249">
    <property type="entry name" value="Metalloenz_LuxS/M16"/>
</dbReference>
<dbReference type="InterPro" id="IPR003815">
    <property type="entry name" value="S-ribosylhomocysteinase"/>
</dbReference>
<dbReference type="NCBIfam" id="NF002602">
    <property type="entry name" value="PRK02260.1-2"/>
    <property type="match status" value="1"/>
</dbReference>
<dbReference type="PANTHER" id="PTHR35799">
    <property type="entry name" value="S-RIBOSYLHOMOCYSTEINE LYASE"/>
    <property type="match status" value="1"/>
</dbReference>
<dbReference type="PANTHER" id="PTHR35799:SF1">
    <property type="entry name" value="S-RIBOSYLHOMOCYSTEINE LYASE"/>
    <property type="match status" value="1"/>
</dbReference>
<dbReference type="Pfam" id="PF02664">
    <property type="entry name" value="LuxS"/>
    <property type="match status" value="1"/>
</dbReference>
<dbReference type="PIRSF" id="PIRSF006160">
    <property type="entry name" value="AI2"/>
    <property type="match status" value="1"/>
</dbReference>
<dbReference type="PRINTS" id="PR01487">
    <property type="entry name" value="LUXSPROTEIN"/>
</dbReference>
<dbReference type="SUPFAM" id="SSF63411">
    <property type="entry name" value="LuxS/MPP-like metallohydrolase"/>
    <property type="match status" value="1"/>
</dbReference>
<evidence type="ECO:0000255" key="1">
    <source>
        <dbReference type="HAMAP-Rule" id="MF_00091"/>
    </source>
</evidence>
<proteinExistence type="inferred from homology"/>
<organism>
    <name type="scientific">Sulfurovum sp. (strain NBC37-1)</name>
    <dbReference type="NCBI Taxonomy" id="387093"/>
    <lineage>
        <taxon>Bacteria</taxon>
        <taxon>Pseudomonadati</taxon>
        <taxon>Campylobacterota</taxon>
        <taxon>Epsilonproteobacteria</taxon>
        <taxon>Campylobacterales</taxon>
        <taxon>Sulfurovaceae</taxon>
        <taxon>Sulfurovum</taxon>
    </lineage>
</organism>
<gene>
    <name evidence="1" type="primary">luxS</name>
    <name type="ordered locus">SUN_0202</name>
</gene>
<comment type="function">
    <text evidence="1">Involved in the synthesis of autoinducer 2 (AI-2) which is secreted by bacteria and is used to communicate both the cell density and the metabolic potential of the environment. The regulation of gene expression in response to changes in cell density is called quorum sensing. Catalyzes the transformation of S-ribosylhomocysteine (RHC) to homocysteine (HC) and 4,5-dihydroxy-2,3-pentadione (DPD).</text>
</comment>
<comment type="catalytic activity">
    <reaction evidence="1">
        <text>S-(5-deoxy-D-ribos-5-yl)-L-homocysteine = (S)-4,5-dihydroxypentane-2,3-dione + L-homocysteine</text>
        <dbReference type="Rhea" id="RHEA:17753"/>
        <dbReference type="ChEBI" id="CHEBI:29484"/>
        <dbReference type="ChEBI" id="CHEBI:58195"/>
        <dbReference type="ChEBI" id="CHEBI:58199"/>
        <dbReference type="EC" id="4.4.1.21"/>
    </reaction>
</comment>
<comment type="cofactor">
    <cofactor evidence="1">
        <name>Fe cation</name>
        <dbReference type="ChEBI" id="CHEBI:24875"/>
    </cofactor>
    <text evidence="1">Binds 1 Fe cation per subunit.</text>
</comment>
<comment type="subunit">
    <text evidence="1">Homodimer.</text>
</comment>
<comment type="similarity">
    <text evidence="1">Belongs to the LuxS family.</text>
</comment>
<accession>A6Q6Q3</accession>